<accession>A4WCW4</accession>
<organism>
    <name type="scientific">Enterobacter sp. (strain 638)</name>
    <dbReference type="NCBI Taxonomy" id="399742"/>
    <lineage>
        <taxon>Bacteria</taxon>
        <taxon>Pseudomonadati</taxon>
        <taxon>Pseudomonadota</taxon>
        <taxon>Gammaproteobacteria</taxon>
        <taxon>Enterobacterales</taxon>
        <taxon>Enterobacteriaceae</taxon>
        <taxon>Enterobacter</taxon>
    </lineage>
</organism>
<sequence length="183" mass="21126">MKKKTSLSEEDQSLFRQLMSGTRQIAQDTIVHRPIRKKVTEVPVKRLLQEQADNSHYFSDEFQPLLNTQGAVKYVREDVSHFELKKLRRGDYSPELFLDLHGLTQMQAKQELGALIAACRREHVFCTCVMHGHGKHILKQQTPLWLAQHPHVMAFHQAPKEYGGDAALLVLIEIEEWQPPELP</sequence>
<comment type="function">
    <text evidence="1">Acts as a ribosome collision sensor. Detects stalled/collided disomes (pairs of ribosomes where the leading ribosome is stalled and a second ribosome has collided with it) and endonucleolytically cleaves mRNA at the 5' boundary of the stalled ribosome. Stalled/collided disomes form a new interface (primarily via the 30S subunits) that binds SmrB. Cleaved mRNA becomes available for tmRNA ligation, leading to ribosomal subunit dissociation and rescue of stalled ribosomes.</text>
</comment>
<comment type="subunit">
    <text evidence="1">Associates with collided ribosomes, but not with correctly translating polysomes.</text>
</comment>
<comment type="similarity">
    <text evidence="1">Belongs to the SmrB family.</text>
</comment>
<evidence type="ECO:0000255" key="1">
    <source>
        <dbReference type="HAMAP-Rule" id="MF_01042"/>
    </source>
</evidence>
<gene>
    <name evidence="1" type="primary">smrB</name>
    <name type="ordered locus">Ent638_2879</name>
</gene>
<reference key="1">
    <citation type="journal article" date="2010" name="PLoS Genet.">
        <title>Genome sequence of the plant growth promoting endophytic bacterium Enterobacter sp. 638.</title>
        <authorList>
            <person name="Taghavi S."/>
            <person name="van der Lelie D."/>
            <person name="Hoffman A."/>
            <person name="Zhang Y.B."/>
            <person name="Walla M.D."/>
            <person name="Vangronsveld J."/>
            <person name="Newman L."/>
            <person name="Monchy S."/>
        </authorList>
    </citation>
    <scope>NUCLEOTIDE SEQUENCE [LARGE SCALE GENOMIC DNA]</scope>
    <source>
        <strain>638</strain>
    </source>
</reference>
<protein>
    <recommendedName>
        <fullName evidence="1">Ribosome rescue factor SmrB</fullName>
        <ecNumber evidence="1">3.1.-.-</ecNumber>
    </recommendedName>
</protein>
<feature type="chain" id="PRO_1000084351" description="Ribosome rescue factor SmrB">
    <location>
        <begin position="1"/>
        <end position="183"/>
    </location>
</feature>
<feature type="domain" description="Smr" evidence="1">
    <location>
        <begin position="98"/>
        <end position="173"/>
    </location>
</feature>
<keyword id="KW-0255">Endonuclease</keyword>
<keyword id="KW-0378">Hydrolase</keyword>
<keyword id="KW-0540">Nuclease</keyword>
<keyword id="KW-0694">RNA-binding</keyword>
<keyword id="KW-0699">rRNA-binding</keyword>
<dbReference type="EC" id="3.1.-.-" evidence="1"/>
<dbReference type="EMBL" id="CP000653">
    <property type="protein sequence ID" value="ABP61544.1"/>
    <property type="molecule type" value="Genomic_DNA"/>
</dbReference>
<dbReference type="RefSeq" id="WP_015959877.1">
    <property type="nucleotide sequence ID" value="NC_009436.1"/>
</dbReference>
<dbReference type="SMR" id="A4WCW4"/>
<dbReference type="STRING" id="399742.Ent638_2879"/>
<dbReference type="KEGG" id="ent:Ent638_2879"/>
<dbReference type="eggNOG" id="COG2840">
    <property type="taxonomic scope" value="Bacteria"/>
</dbReference>
<dbReference type="HOGENOM" id="CLU_055978_4_0_6"/>
<dbReference type="OrthoDB" id="5795446at2"/>
<dbReference type="Proteomes" id="UP000000230">
    <property type="component" value="Chromosome"/>
</dbReference>
<dbReference type="GO" id="GO:0004521">
    <property type="term" value="F:RNA endonuclease activity"/>
    <property type="evidence" value="ECO:0007669"/>
    <property type="project" value="UniProtKB-UniRule"/>
</dbReference>
<dbReference type="GO" id="GO:0019843">
    <property type="term" value="F:rRNA binding"/>
    <property type="evidence" value="ECO:0007669"/>
    <property type="project" value="UniProtKB-UniRule"/>
</dbReference>
<dbReference type="GO" id="GO:0072344">
    <property type="term" value="P:rescue of stalled ribosome"/>
    <property type="evidence" value="ECO:0007669"/>
    <property type="project" value="UniProtKB-UniRule"/>
</dbReference>
<dbReference type="Gene3D" id="3.30.1370.110">
    <property type="match status" value="1"/>
</dbReference>
<dbReference type="HAMAP" id="MF_01042">
    <property type="entry name" value="SmrB"/>
    <property type="match status" value="1"/>
</dbReference>
<dbReference type="InterPro" id="IPR002625">
    <property type="entry name" value="Smr_dom"/>
</dbReference>
<dbReference type="InterPro" id="IPR036063">
    <property type="entry name" value="Smr_dom_sf"/>
</dbReference>
<dbReference type="InterPro" id="IPR022990">
    <property type="entry name" value="SmrB-like"/>
</dbReference>
<dbReference type="NCBIfam" id="NF003432">
    <property type="entry name" value="PRK04946.1"/>
    <property type="match status" value="1"/>
</dbReference>
<dbReference type="PANTHER" id="PTHR35562">
    <property type="entry name" value="DNA ENDONUCLEASE SMRA-RELATED"/>
    <property type="match status" value="1"/>
</dbReference>
<dbReference type="PANTHER" id="PTHR35562:SF1">
    <property type="entry name" value="UPF0115 PROTEIN YFCN"/>
    <property type="match status" value="1"/>
</dbReference>
<dbReference type="Pfam" id="PF01713">
    <property type="entry name" value="Smr"/>
    <property type="match status" value="1"/>
</dbReference>
<dbReference type="SMART" id="SM00463">
    <property type="entry name" value="SMR"/>
    <property type="match status" value="1"/>
</dbReference>
<dbReference type="SUPFAM" id="SSF160443">
    <property type="entry name" value="SMR domain-like"/>
    <property type="match status" value="1"/>
</dbReference>
<dbReference type="PROSITE" id="PS50828">
    <property type="entry name" value="SMR"/>
    <property type="match status" value="1"/>
</dbReference>
<name>SMRB_ENT38</name>
<proteinExistence type="inferred from homology"/>